<gene>
    <name evidence="2" type="primary">infB</name>
    <name type="ordered locus">Mvan_2314</name>
</gene>
<sequence length="930" mass="96072">MAGKARVHELAKELGVTSKEVLARLSEQGEFVKSASSTVEAPVARRLRESYGGSKSDKTKAAPSGNGAAGATVKPSAPQSRPGPKPGPPVAQQPAAPAAPPAAPPAPPTPAAAPPSPAPAAPAAATPAEPAAPSARPGPTPGPRPGPSAPKPGAPKPAARTPRVGNNPFSSQQPVERPAPRPQGPGGPRPGPGAGGPRPGGGPRPGASPGSMPPRPQGARPGGGPRPGGGPRPGGGPRPTPGGAGRPGGGGGGGGNYRGGGAGGGAPAAGGGGFRGRPGGGGGGGRPGQRGGAAGAFGRPGGAPKRGRKSKRAKRAEYENMQAPVVGGVRLPHGNGETIRLARGASLSDFAEKINANPASLVQALFNLGEMVTATQSVGDETLELLGGEMNYVVQVVSPEDEDRELLESFDLTYGEDEGGEEDLEIRPPVVTVMGHVDHGKTRLLDTIRNATVREGEAGGITQHIGAYQVTVDLDGTERPITFIDTPGHEAFTAMRARGAKATDIAILVVAADDGVMPQTVEAINHAQAADVPIVVAVNKIDKEGADPAKIRGQLTEYGLVPEEYGGDAMFVDISAKQGTNIEALLEAVILTADASLDLRANPDMEAQGVAIEAHLDRGRGPVATVLIQRGTLRVGDSVVAGDAYGRVRRMVDEHGEDVEEALPSRPVQVIGFTSVPGAGDNFLVVDEDRIARQIADRRSARKRNALAARTRKRISLEDLDSALKETSQLNLILKGDNSGTVEALEEALLGIQVDDEVELRVIDRGVGGVTETNVNLASASDAIIIGFNVRAEGKATELANREGVEIRYYSIIYQAIDEIESALKGMLKPVYEEKELGRAEIRAIFRSSKVGNIAGCLVQSGIMRRNAKARLLRDNVVVAENLTISSLKREKDDVTEVRDGYECGLTLTYSDIKEGDVIETYELVEKART</sequence>
<evidence type="ECO:0000250" key="1"/>
<evidence type="ECO:0000255" key="2">
    <source>
        <dbReference type="HAMAP-Rule" id="MF_00100"/>
    </source>
</evidence>
<evidence type="ECO:0000256" key="3">
    <source>
        <dbReference type="SAM" id="MobiDB-lite"/>
    </source>
</evidence>
<proteinExistence type="inferred from homology"/>
<protein>
    <recommendedName>
        <fullName evidence="2">Translation initiation factor IF-2</fullName>
    </recommendedName>
</protein>
<comment type="function">
    <text evidence="2">One of the essential components for the initiation of protein synthesis. Protects formylmethionyl-tRNA from spontaneous hydrolysis and promotes its binding to the 30S ribosomal subunits. Also involved in the hydrolysis of GTP during the formation of the 70S ribosomal complex.</text>
</comment>
<comment type="subcellular location">
    <subcellularLocation>
        <location evidence="2">Cytoplasm</location>
    </subcellularLocation>
</comment>
<comment type="similarity">
    <text evidence="2">Belongs to the TRAFAC class translation factor GTPase superfamily. Classic translation factor GTPase family. IF-2 subfamily.</text>
</comment>
<feature type="chain" id="PRO_1000008286" description="Translation initiation factor IF-2">
    <location>
        <begin position="1"/>
        <end position="930"/>
    </location>
</feature>
<feature type="domain" description="tr-type G">
    <location>
        <begin position="426"/>
        <end position="598"/>
    </location>
</feature>
<feature type="region of interest" description="Disordered" evidence="3">
    <location>
        <begin position="29"/>
        <end position="316"/>
    </location>
</feature>
<feature type="region of interest" description="G1" evidence="1">
    <location>
        <begin position="435"/>
        <end position="442"/>
    </location>
</feature>
<feature type="region of interest" description="G2" evidence="1">
    <location>
        <begin position="460"/>
        <end position="464"/>
    </location>
</feature>
<feature type="region of interest" description="G3" evidence="1">
    <location>
        <begin position="485"/>
        <end position="488"/>
    </location>
</feature>
<feature type="region of interest" description="G4" evidence="1">
    <location>
        <begin position="539"/>
        <end position="542"/>
    </location>
</feature>
<feature type="region of interest" description="G5" evidence="1">
    <location>
        <begin position="575"/>
        <end position="577"/>
    </location>
</feature>
<feature type="compositionally biased region" description="Pro residues" evidence="3">
    <location>
        <begin position="81"/>
        <end position="120"/>
    </location>
</feature>
<feature type="compositionally biased region" description="Low complexity" evidence="3">
    <location>
        <begin position="121"/>
        <end position="135"/>
    </location>
</feature>
<feature type="compositionally biased region" description="Pro residues" evidence="3">
    <location>
        <begin position="136"/>
        <end position="155"/>
    </location>
</feature>
<feature type="compositionally biased region" description="Pro residues" evidence="3">
    <location>
        <begin position="180"/>
        <end position="191"/>
    </location>
</feature>
<feature type="compositionally biased region" description="Gly residues" evidence="3">
    <location>
        <begin position="192"/>
        <end position="204"/>
    </location>
</feature>
<feature type="compositionally biased region" description="Pro residues" evidence="3">
    <location>
        <begin position="228"/>
        <end position="240"/>
    </location>
</feature>
<feature type="compositionally biased region" description="Gly residues" evidence="3">
    <location>
        <begin position="241"/>
        <end position="301"/>
    </location>
</feature>
<feature type="compositionally biased region" description="Basic residues" evidence="3">
    <location>
        <begin position="305"/>
        <end position="314"/>
    </location>
</feature>
<feature type="binding site" evidence="2">
    <location>
        <begin position="435"/>
        <end position="442"/>
    </location>
    <ligand>
        <name>GTP</name>
        <dbReference type="ChEBI" id="CHEBI:37565"/>
    </ligand>
</feature>
<feature type="binding site" evidence="2">
    <location>
        <begin position="485"/>
        <end position="489"/>
    </location>
    <ligand>
        <name>GTP</name>
        <dbReference type="ChEBI" id="CHEBI:37565"/>
    </ligand>
</feature>
<feature type="binding site" evidence="2">
    <location>
        <begin position="539"/>
        <end position="542"/>
    </location>
    <ligand>
        <name>GTP</name>
        <dbReference type="ChEBI" id="CHEBI:37565"/>
    </ligand>
</feature>
<keyword id="KW-0963">Cytoplasm</keyword>
<keyword id="KW-0342">GTP-binding</keyword>
<keyword id="KW-0396">Initiation factor</keyword>
<keyword id="KW-0547">Nucleotide-binding</keyword>
<keyword id="KW-0648">Protein biosynthesis</keyword>
<dbReference type="EMBL" id="CP000511">
    <property type="protein sequence ID" value="ABM13128.1"/>
    <property type="molecule type" value="Genomic_DNA"/>
</dbReference>
<dbReference type="SMR" id="A1T7H8"/>
<dbReference type="STRING" id="350058.Mvan_2314"/>
<dbReference type="KEGG" id="mva:Mvan_2314"/>
<dbReference type="eggNOG" id="COG0481">
    <property type="taxonomic scope" value="Bacteria"/>
</dbReference>
<dbReference type="HOGENOM" id="CLU_006301_9_2_11"/>
<dbReference type="Proteomes" id="UP000009159">
    <property type="component" value="Chromosome"/>
</dbReference>
<dbReference type="GO" id="GO:0005829">
    <property type="term" value="C:cytosol"/>
    <property type="evidence" value="ECO:0007669"/>
    <property type="project" value="TreeGrafter"/>
</dbReference>
<dbReference type="GO" id="GO:0005525">
    <property type="term" value="F:GTP binding"/>
    <property type="evidence" value="ECO:0007669"/>
    <property type="project" value="UniProtKB-KW"/>
</dbReference>
<dbReference type="GO" id="GO:0003924">
    <property type="term" value="F:GTPase activity"/>
    <property type="evidence" value="ECO:0007669"/>
    <property type="project" value="UniProtKB-UniRule"/>
</dbReference>
<dbReference type="GO" id="GO:0003743">
    <property type="term" value="F:translation initiation factor activity"/>
    <property type="evidence" value="ECO:0007669"/>
    <property type="project" value="UniProtKB-UniRule"/>
</dbReference>
<dbReference type="CDD" id="cd01887">
    <property type="entry name" value="IF2_eIF5B"/>
    <property type="match status" value="1"/>
</dbReference>
<dbReference type="CDD" id="cd03702">
    <property type="entry name" value="IF2_mtIF2_II"/>
    <property type="match status" value="1"/>
</dbReference>
<dbReference type="CDD" id="cd03692">
    <property type="entry name" value="mtIF2_IVc"/>
    <property type="match status" value="1"/>
</dbReference>
<dbReference type="FunFam" id="1.10.10.2480:FF:000003">
    <property type="entry name" value="Translation initiation factor IF-2"/>
    <property type="match status" value="1"/>
</dbReference>
<dbReference type="FunFam" id="2.40.30.10:FF:000007">
    <property type="entry name" value="Translation initiation factor IF-2"/>
    <property type="match status" value="1"/>
</dbReference>
<dbReference type="FunFam" id="2.40.30.10:FF:000008">
    <property type="entry name" value="Translation initiation factor IF-2"/>
    <property type="match status" value="1"/>
</dbReference>
<dbReference type="FunFam" id="3.40.50.10050:FF:000001">
    <property type="entry name" value="Translation initiation factor IF-2"/>
    <property type="match status" value="1"/>
</dbReference>
<dbReference type="FunFam" id="3.40.50.300:FF:000019">
    <property type="entry name" value="Translation initiation factor IF-2"/>
    <property type="match status" value="1"/>
</dbReference>
<dbReference type="Gene3D" id="1.10.10.2480">
    <property type="match status" value="1"/>
</dbReference>
<dbReference type="Gene3D" id="3.40.50.300">
    <property type="entry name" value="P-loop containing nucleotide triphosphate hydrolases"/>
    <property type="match status" value="1"/>
</dbReference>
<dbReference type="Gene3D" id="2.40.30.10">
    <property type="entry name" value="Translation factors"/>
    <property type="match status" value="2"/>
</dbReference>
<dbReference type="Gene3D" id="3.40.50.10050">
    <property type="entry name" value="Translation initiation factor IF- 2, domain 3"/>
    <property type="match status" value="1"/>
</dbReference>
<dbReference type="HAMAP" id="MF_00100_B">
    <property type="entry name" value="IF_2_B"/>
    <property type="match status" value="1"/>
</dbReference>
<dbReference type="InterPro" id="IPR053905">
    <property type="entry name" value="EF-G-like_DII"/>
</dbReference>
<dbReference type="InterPro" id="IPR044145">
    <property type="entry name" value="IF2_II"/>
</dbReference>
<dbReference type="InterPro" id="IPR006847">
    <property type="entry name" value="IF2_N"/>
</dbReference>
<dbReference type="InterPro" id="IPR027417">
    <property type="entry name" value="P-loop_NTPase"/>
</dbReference>
<dbReference type="InterPro" id="IPR005225">
    <property type="entry name" value="Small_GTP-bd"/>
</dbReference>
<dbReference type="InterPro" id="IPR000795">
    <property type="entry name" value="T_Tr_GTP-bd_dom"/>
</dbReference>
<dbReference type="InterPro" id="IPR000178">
    <property type="entry name" value="TF_IF2_bacterial-like"/>
</dbReference>
<dbReference type="InterPro" id="IPR015760">
    <property type="entry name" value="TIF_IF2"/>
</dbReference>
<dbReference type="InterPro" id="IPR023115">
    <property type="entry name" value="TIF_IF2_dom3"/>
</dbReference>
<dbReference type="InterPro" id="IPR036925">
    <property type="entry name" value="TIF_IF2_dom3_sf"/>
</dbReference>
<dbReference type="InterPro" id="IPR009000">
    <property type="entry name" value="Transl_B-barrel_sf"/>
</dbReference>
<dbReference type="NCBIfam" id="TIGR00487">
    <property type="entry name" value="IF-2"/>
    <property type="match status" value="1"/>
</dbReference>
<dbReference type="NCBIfam" id="TIGR00231">
    <property type="entry name" value="small_GTP"/>
    <property type="match status" value="1"/>
</dbReference>
<dbReference type="PANTHER" id="PTHR43381:SF5">
    <property type="entry name" value="TR-TYPE G DOMAIN-CONTAINING PROTEIN"/>
    <property type="match status" value="1"/>
</dbReference>
<dbReference type="PANTHER" id="PTHR43381">
    <property type="entry name" value="TRANSLATION INITIATION FACTOR IF-2-RELATED"/>
    <property type="match status" value="1"/>
</dbReference>
<dbReference type="Pfam" id="PF22042">
    <property type="entry name" value="EF-G_D2"/>
    <property type="match status" value="1"/>
</dbReference>
<dbReference type="Pfam" id="PF00009">
    <property type="entry name" value="GTP_EFTU"/>
    <property type="match status" value="1"/>
</dbReference>
<dbReference type="Pfam" id="PF11987">
    <property type="entry name" value="IF-2"/>
    <property type="match status" value="1"/>
</dbReference>
<dbReference type="Pfam" id="PF04760">
    <property type="entry name" value="IF2_N"/>
    <property type="match status" value="2"/>
</dbReference>
<dbReference type="PRINTS" id="PR00315">
    <property type="entry name" value="ELONGATNFCT"/>
</dbReference>
<dbReference type="SUPFAM" id="SSF52156">
    <property type="entry name" value="Initiation factor IF2/eIF5b, domain 3"/>
    <property type="match status" value="1"/>
</dbReference>
<dbReference type="SUPFAM" id="SSF52540">
    <property type="entry name" value="P-loop containing nucleoside triphosphate hydrolases"/>
    <property type="match status" value="1"/>
</dbReference>
<dbReference type="SUPFAM" id="SSF50447">
    <property type="entry name" value="Translation proteins"/>
    <property type="match status" value="2"/>
</dbReference>
<dbReference type="PROSITE" id="PS51722">
    <property type="entry name" value="G_TR_2"/>
    <property type="match status" value="1"/>
</dbReference>
<dbReference type="PROSITE" id="PS01176">
    <property type="entry name" value="IF2"/>
    <property type="match status" value="1"/>
</dbReference>
<accession>A1T7H8</accession>
<name>IF2_MYCVP</name>
<reference key="1">
    <citation type="submission" date="2006-12" db="EMBL/GenBank/DDBJ databases">
        <title>Complete sequence of Mycobacterium vanbaalenii PYR-1.</title>
        <authorList>
            <consortium name="US DOE Joint Genome Institute"/>
            <person name="Copeland A."/>
            <person name="Lucas S."/>
            <person name="Lapidus A."/>
            <person name="Barry K."/>
            <person name="Detter J.C."/>
            <person name="Glavina del Rio T."/>
            <person name="Hammon N."/>
            <person name="Israni S."/>
            <person name="Dalin E."/>
            <person name="Tice H."/>
            <person name="Pitluck S."/>
            <person name="Singan V."/>
            <person name="Schmutz J."/>
            <person name="Larimer F."/>
            <person name="Land M."/>
            <person name="Hauser L."/>
            <person name="Kyrpides N."/>
            <person name="Anderson I.J."/>
            <person name="Miller C."/>
            <person name="Richardson P."/>
        </authorList>
    </citation>
    <scope>NUCLEOTIDE SEQUENCE [LARGE SCALE GENOMIC DNA]</scope>
    <source>
        <strain>DSM 7251 / JCM 13017 / BCRC 16820 / KCTC 9966 / NRRL B-24157 / PYR-1</strain>
    </source>
</reference>
<organism>
    <name type="scientific">Mycolicibacterium vanbaalenii (strain DSM 7251 / JCM 13017 / BCRC 16820 / KCTC 9966 / NRRL B-24157 / PYR-1)</name>
    <name type="common">Mycobacterium vanbaalenii</name>
    <dbReference type="NCBI Taxonomy" id="350058"/>
    <lineage>
        <taxon>Bacteria</taxon>
        <taxon>Bacillati</taxon>
        <taxon>Actinomycetota</taxon>
        <taxon>Actinomycetes</taxon>
        <taxon>Mycobacteriales</taxon>
        <taxon>Mycobacteriaceae</taxon>
        <taxon>Mycolicibacterium</taxon>
    </lineage>
</organism>